<organism>
    <name type="scientific">Mycobacterium tuberculosis (strain CDC 1551 / Oshkosh)</name>
    <dbReference type="NCBI Taxonomy" id="83331"/>
    <lineage>
        <taxon>Bacteria</taxon>
        <taxon>Bacillati</taxon>
        <taxon>Actinomycetota</taxon>
        <taxon>Actinomycetes</taxon>
        <taxon>Mycobacteriales</taxon>
        <taxon>Mycobacteriaceae</taxon>
        <taxon>Mycobacterium</taxon>
        <taxon>Mycobacterium tuberculosis complex</taxon>
    </lineage>
</organism>
<keyword id="KW-0021">Allosteric enzyme</keyword>
<keyword id="KW-1185">Reference proteome</keyword>
<keyword id="KW-0808">Transferase</keyword>
<keyword id="KW-0816">Tricarboxylic acid cycle</keyword>
<gene>
    <name type="primary">gltA2</name>
    <name type="synonym">gltA</name>
    <name type="ordered locus">MT0920</name>
</gene>
<proteinExistence type="inferred from homology"/>
<comment type="catalytic activity">
    <reaction evidence="2">
        <text>oxaloacetate + acetyl-CoA + H2O = citrate + CoA + H(+)</text>
        <dbReference type="Rhea" id="RHEA:16845"/>
        <dbReference type="ChEBI" id="CHEBI:15377"/>
        <dbReference type="ChEBI" id="CHEBI:15378"/>
        <dbReference type="ChEBI" id="CHEBI:16452"/>
        <dbReference type="ChEBI" id="CHEBI:16947"/>
        <dbReference type="ChEBI" id="CHEBI:57287"/>
        <dbReference type="ChEBI" id="CHEBI:57288"/>
        <dbReference type="EC" id="2.3.3.16"/>
    </reaction>
</comment>
<comment type="pathway">
    <text>Carbohydrate metabolism; tricarboxylic acid cycle; isocitrate from oxaloacetate: step 1/2.</text>
</comment>
<comment type="subunit">
    <text evidence="1">Homohexamer.</text>
</comment>
<comment type="miscellaneous">
    <text evidence="1">Citrate synthase is found in nearly all cells capable of oxidative metabolism.</text>
</comment>
<comment type="similarity">
    <text evidence="3">Belongs to the citrate synthase family.</text>
</comment>
<name>CISY1_MYCTO</name>
<protein>
    <recommendedName>
        <fullName>Citrate synthase 1</fullName>
        <ecNumber>2.3.3.16</ecNumber>
    </recommendedName>
</protein>
<dbReference type="EC" id="2.3.3.16"/>
<dbReference type="EMBL" id="AE000516">
    <property type="protein sequence ID" value="AAK45166.1"/>
    <property type="molecule type" value="Genomic_DNA"/>
</dbReference>
<dbReference type="PIR" id="E70782">
    <property type="entry name" value="E70782"/>
</dbReference>
<dbReference type="RefSeq" id="WP_003901040.1">
    <property type="nucleotide sequence ID" value="NZ_KK341227.1"/>
</dbReference>
<dbReference type="SMR" id="P9WPD4"/>
<dbReference type="KEGG" id="mtc:MT0920"/>
<dbReference type="PATRIC" id="fig|83331.31.peg.988"/>
<dbReference type="HOGENOM" id="CLU_025068_0_0_11"/>
<dbReference type="UniPathway" id="UPA00223">
    <property type="reaction ID" value="UER00717"/>
</dbReference>
<dbReference type="Proteomes" id="UP000001020">
    <property type="component" value="Chromosome"/>
</dbReference>
<dbReference type="GO" id="GO:0005737">
    <property type="term" value="C:cytoplasm"/>
    <property type="evidence" value="ECO:0007669"/>
    <property type="project" value="InterPro"/>
</dbReference>
<dbReference type="GO" id="GO:0004108">
    <property type="term" value="F:citrate (Si)-synthase activity"/>
    <property type="evidence" value="ECO:0007669"/>
    <property type="project" value="InterPro"/>
</dbReference>
<dbReference type="GO" id="GO:0006099">
    <property type="term" value="P:tricarboxylic acid cycle"/>
    <property type="evidence" value="ECO:0007669"/>
    <property type="project" value="UniProtKB-UniPathway"/>
</dbReference>
<dbReference type="CDD" id="cd06114">
    <property type="entry name" value="EcCS_like"/>
    <property type="match status" value="1"/>
</dbReference>
<dbReference type="FunFam" id="1.10.230.10:FF:000002">
    <property type="entry name" value="Citrate synthase"/>
    <property type="match status" value="1"/>
</dbReference>
<dbReference type="Gene3D" id="2.20.28.60">
    <property type="match status" value="1"/>
</dbReference>
<dbReference type="Gene3D" id="1.10.580.10">
    <property type="entry name" value="Citrate Synthase, domain 1"/>
    <property type="match status" value="1"/>
</dbReference>
<dbReference type="Gene3D" id="1.10.230.10">
    <property type="entry name" value="Cytochrome P450-Terp, domain 2"/>
    <property type="match status" value="1"/>
</dbReference>
<dbReference type="InterPro" id="IPR016142">
    <property type="entry name" value="Citrate_synth-like_lrg_a-sub"/>
</dbReference>
<dbReference type="InterPro" id="IPR016143">
    <property type="entry name" value="Citrate_synth-like_sm_a-sub"/>
</dbReference>
<dbReference type="InterPro" id="IPR002020">
    <property type="entry name" value="Citrate_synthase"/>
</dbReference>
<dbReference type="InterPro" id="IPR019810">
    <property type="entry name" value="Citrate_synthase_AS"/>
</dbReference>
<dbReference type="InterPro" id="IPR024176">
    <property type="entry name" value="Citrate_synthase_bac-typ"/>
</dbReference>
<dbReference type="InterPro" id="IPR036969">
    <property type="entry name" value="Citrate_synthase_sf"/>
</dbReference>
<dbReference type="InterPro" id="IPR010953">
    <property type="entry name" value="Citrate_synthase_typ-I"/>
</dbReference>
<dbReference type="NCBIfam" id="TIGR01798">
    <property type="entry name" value="cit_synth_I"/>
    <property type="match status" value="1"/>
</dbReference>
<dbReference type="NCBIfam" id="NF004126">
    <property type="entry name" value="PRK05614.1"/>
    <property type="match status" value="1"/>
</dbReference>
<dbReference type="PANTHER" id="PTHR42871">
    <property type="entry name" value="CITRATE SYNTHASE"/>
    <property type="match status" value="1"/>
</dbReference>
<dbReference type="PANTHER" id="PTHR42871:SF1">
    <property type="entry name" value="CITRATE SYNTHASE"/>
    <property type="match status" value="1"/>
</dbReference>
<dbReference type="Pfam" id="PF00285">
    <property type="entry name" value="Citrate_synt"/>
    <property type="match status" value="1"/>
</dbReference>
<dbReference type="PIRSF" id="PIRSF001369">
    <property type="entry name" value="Citrate_synth"/>
    <property type="match status" value="1"/>
</dbReference>
<dbReference type="PRINTS" id="PR00143">
    <property type="entry name" value="CITRTSNTHASE"/>
</dbReference>
<dbReference type="SUPFAM" id="SSF48256">
    <property type="entry name" value="Citrate synthase"/>
    <property type="match status" value="1"/>
</dbReference>
<dbReference type="PROSITE" id="PS00480">
    <property type="entry name" value="CITRATE_SYNTHASE"/>
    <property type="match status" value="1"/>
</dbReference>
<reference key="1">
    <citation type="journal article" date="2002" name="J. Bacteriol.">
        <title>Whole-genome comparison of Mycobacterium tuberculosis clinical and laboratory strains.</title>
        <authorList>
            <person name="Fleischmann R.D."/>
            <person name="Alland D."/>
            <person name="Eisen J.A."/>
            <person name="Carpenter L."/>
            <person name="White O."/>
            <person name="Peterson J.D."/>
            <person name="DeBoy R.T."/>
            <person name="Dodson R.J."/>
            <person name="Gwinn M.L."/>
            <person name="Haft D.H."/>
            <person name="Hickey E.K."/>
            <person name="Kolonay J.F."/>
            <person name="Nelson W.C."/>
            <person name="Umayam L.A."/>
            <person name="Ermolaeva M.D."/>
            <person name="Salzberg S.L."/>
            <person name="Delcher A."/>
            <person name="Utterback T.R."/>
            <person name="Weidman J.F."/>
            <person name="Khouri H.M."/>
            <person name="Gill J."/>
            <person name="Mikula A."/>
            <person name="Bishai W."/>
            <person name="Jacobs W.R. Jr."/>
            <person name="Venter J.C."/>
            <person name="Fraser C.M."/>
        </authorList>
    </citation>
    <scope>NUCLEOTIDE SEQUENCE [LARGE SCALE GENOMIC DNA]</scope>
    <source>
        <strain>CDC 1551 / Oshkosh</strain>
    </source>
</reference>
<accession>P9WPD4</accession>
<accession>L0T6R4</accession>
<accession>Q10530</accession>
<sequence>MADTDDTATLRYPGGEIDLQIVHATEGADGIALGPLLAKTGHTTFDVGFANTAAAKSSITYIDGDAGILRYRGYPIDQLAEKSTFIEVCYLLIYGELPDTDQLAQFTGRIQRHTMLHEDLKRFFDGFPRNAHPMPVLSSVVNALSAYYQDALDPMDNGQVELSTIRLLAKLPTIAAYAYKKSVGQPFLYPDNSLTLVENFLRLTFGFPAEPYQADPEVVRALDMLFILHADHEQNCSTSTVRLVGSSRANLFTSISGGINALWGPLHGGANQAVLEMLEGIRDSGDDVSEFVRKVKNREAGVKLMGFGHRVYKNYDPRARIVKEQADKILAKLGGDDSLLGIAKELEEAALTDDYFIERKLYPNVDFYTGLIYRALGFPTRMFTVLFALGRLPGWIAHWREMHDEGDSKIGRPRQIYTGYTERDYVTIDAR</sequence>
<feature type="chain" id="PRO_0000426971" description="Citrate synthase 1">
    <location>
        <begin position="1"/>
        <end position="431"/>
    </location>
</feature>
<feature type="active site" evidence="2">
    <location>
        <position position="309"/>
    </location>
</feature>
<feature type="active site" evidence="2">
    <location>
        <position position="366"/>
    </location>
</feature>
<evidence type="ECO:0000250" key="1"/>
<evidence type="ECO:0000255" key="2">
    <source>
        <dbReference type="PROSITE-ProRule" id="PRU10117"/>
    </source>
</evidence>
<evidence type="ECO:0000305" key="3"/>